<organism>
    <name type="scientific">Homo sapiens</name>
    <name type="common">Human</name>
    <dbReference type="NCBI Taxonomy" id="9606"/>
    <lineage>
        <taxon>Eukaryota</taxon>
        <taxon>Metazoa</taxon>
        <taxon>Chordata</taxon>
        <taxon>Craniata</taxon>
        <taxon>Vertebrata</taxon>
        <taxon>Euteleostomi</taxon>
        <taxon>Mammalia</taxon>
        <taxon>Eutheria</taxon>
        <taxon>Euarchontoglires</taxon>
        <taxon>Primates</taxon>
        <taxon>Haplorrhini</taxon>
        <taxon>Catarrhini</taxon>
        <taxon>Hominidae</taxon>
        <taxon>Homo</taxon>
    </lineage>
</organism>
<sequence length="939" mass="101330">MATSQYFDFAQGGGPQYSAQPPTLPLPTVGASYTAQPTPGMDPAVNPAFPPAAPAGYGGYQPHSGQDFAYGSRPQEPVPTATTMATYQDSYSYGQSAAARSYEDRPYFQSAALQSGRMTAADSGQPGTQEACGQPSPHGSHSHAQPPQQAPIVESGQPASTLSSGYTYPTATGVQPESSASIVTSYPPPSYNPTCTAYTAPSYPNYDASVYSAASPFYPPAQPPPPPGPPQQLPPPPAPAGSGSSPRADSKPPLPSKLPRPKAGPRQLQLHYCDICKISCAGPQTYREHLGGQKHRKKEAAQKTGVQPNGSPRGVQAQLHCDLCAVSCTGADAYAAHIRGSKHQKVFKLHAKLGKPIPTLEPALATESPPGAEAKPTSPTGPSVCASSRPALAKRPVASKALCEGPPEPQAAGCRPQWGKPAQPKLEGPGAPTQGGSKEAPAGCSDAQPVGPEYVEEVFSDEGRVLRFHCKLCECSFNDLNAKDLHVRGRRHRLQYRKKVNPDLPIATEPSSRARKVLEERMRKQRHLAEERLEQLRRWHAERRRLEEEPPQDVPPHAPPDWAQPLLMGRPESPASAPLQPGRRPASSDDRHVMCKHATIYPTEQELLAVQRAVSHAERALKLVSDTLAEEDRGRREEEGDKRSSVAPQTRVLKGVMRVGILAKGLLLRGDRNVRLALLCSEKPTHSLLRRIAQQLPRQLQMVTEDEYEVSSDPEANIVISSCEEPRMQVTISVTSPLMREDPSTDPGVEEPQADAGDVLSPKKCLESLAALRHARWFQARASGLQPCVIVIRVLRDLCRRVPTWGALPAWAMELLVEKAVSSAAGPLGPGDAVRRVLECVATGTLLTDGPGLQDPCERDQTDALEPMTLQEREDVTASAQHALRMLAFRQTHKVLGMDLLPPRHRLGARFRKRQRGPGEGEEGAGEKKRGRRGGEGLV</sequence>
<reference key="1">
    <citation type="journal article" date="2004" name="Nat. Genet.">
        <title>Complete sequencing and characterization of 21,243 full-length human cDNAs.</title>
        <authorList>
            <person name="Ota T."/>
            <person name="Suzuki Y."/>
            <person name="Nishikawa T."/>
            <person name="Otsuki T."/>
            <person name="Sugiyama T."/>
            <person name="Irie R."/>
            <person name="Wakamatsu A."/>
            <person name="Hayashi K."/>
            <person name="Sato H."/>
            <person name="Nagai K."/>
            <person name="Kimura K."/>
            <person name="Makita H."/>
            <person name="Sekine M."/>
            <person name="Obayashi M."/>
            <person name="Nishi T."/>
            <person name="Shibahara T."/>
            <person name="Tanaka T."/>
            <person name="Ishii S."/>
            <person name="Yamamoto J."/>
            <person name="Saito K."/>
            <person name="Kawai Y."/>
            <person name="Isono Y."/>
            <person name="Nakamura Y."/>
            <person name="Nagahari K."/>
            <person name="Murakami K."/>
            <person name="Yasuda T."/>
            <person name="Iwayanagi T."/>
            <person name="Wagatsuma M."/>
            <person name="Shiratori A."/>
            <person name="Sudo H."/>
            <person name="Hosoiri T."/>
            <person name="Kaku Y."/>
            <person name="Kodaira H."/>
            <person name="Kondo H."/>
            <person name="Sugawara M."/>
            <person name="Takahashi M."/>
            <person name="Kanda K."/>
            <person name="Yokoi T."/>
            <person name="Furuya T."/>
            <person name="Kikkawa E."/>
            <person name="Omura Y."/>
            <person name="Abe K."/>
            <person name="Kamihara K."/>
            <person name="Katsuta N."/>
            <person name="Sato K."/>
            <person name="Tanikawa M."/>
            <person name="Yamazaki M."/>
            <person name="Ninomiya K."/>
            <person name="Ishibashi T."/>
            <person name="Yamashita H."/>
            <person name="Murakawa K."/>
            <person name="Fujimori K."/>
            <person name="Tanai H."/>
            <person name="Kimata M."/>
            <person name="Watanabe M."/>
            <person name="Hiraoka S."/>
            <person name="Chiba Y."/>
            <person name="Ishida S."/>
            <person name="Ono Y."/>
            <person name="Takiguchi S."/>
            <person name="Watanabe S."/>
            <person name="Yosida M."/>
            <person name="Hotuta T."/>
            <person name="Kusano J."/>
            <person name="Kanehori K."/>
            <person name="Takahashi-Fujii A."/>
            <person name="Hara H."/>
            <person name="Tanase T.-O."/>
            <person name="Nomura Y."/>
            <person name="Togiya S."/>
            <person name="Komai F."/>
            <person name="Hara R."/>
            <person name="Takeuchi K."/>
            <person name="Arita M."/>
            <person name="Imose N."/>
            <person name="Musashino K."/>
            <person name="Yuuki H."/>
            <person name="Oshima A."/>
            <person name="Sasaki N."/>
            <person name="Aotsuka S."/>
            <person name="Yoshikawa Y."/>
            <person name="Matsunawa H."/>
            <person name="Ichihara T."/>
            <person name="Shiohata N."/>
            <person name="Sano S."/>
            <person name="Moriya S."/>
            <person name="Momiyama H."/>
            <person name="Satoh N."/>
            <person name="Takami S."/>
            <person name="Terashima Y."/>
            <person name="Suzuki O."/>
            <person name="Nakagawa S."/>
            <person name="Senoh A."/>
            <person name="Mizoguchi H."/>
            <person name="Goto Y."/>
            <person name="Shimizu F."/>
            <person name="Wakebe H."/>
            <person name="Hishigaki H."/>
            <person name="Watanabe T."/>
            <person name="Sugiyama A."/>
            <person name="Takemoto M."/>
            <person name="Kawakami B."/>
            <person name="Yamazaki M."/>
            <person name="Watanabe K."/>
            <person name="Kumagai A."/>
            <person name="Itakura S."/>
            <person name="Fukuzumi Y."/>
            <person name="Fujimori Y."/>
            <person name="Komiyama M."/>
            <person name="Tashiro H."/>
            <person name="Tanigami A."/>
            <person name="Fujiwara T."/>
            <person name="Ono T."/>
            <person name="Yamada K."/>
            <person name="Fujii Y."/>
            <person name="Ozaki K."/>
            <person name="Hirao M."/>
            <person name="Ohmori Y."/>
            <person name="Kawabata A."/>
            <person name="Hikiji T."/>
            <person name="Kobatake N."/>
            <person name="Inagaki H."/>
            <person name="Ikema Y."/>
            <person name="Okamoto S."/>
            <person name="Okitani R."/>
            <person name="Kawakami T."/>
            <person name="Noguchi S."/>
            <person name="Itoh T."/>
            <person name="Shigeta K."/>
            <person name="Senba T."/>
            <person name="Matsumura K."/>
            <person name="Nakajima Y."/>
            <person name="Mizuno T."/>
            <person name="Morinaga M."/>
            <person name="Sasaki M."/>
            <person name="Togashi T."/>
            <person name="Oyama M."/>
            <person name="Hata H."/>
            <person name="Watanabe M."/>
            <person name="Komatsu T."/>
            <person name="Mizushima-Sugano J."/>
            <person name="Satoh T."/>
            <person name="Shirai Y."/>
            <person name="Takahashi Y."/>
            <person name="Nakagawa K."/>
            <person name="Okumura K."/>
            <person name="Nagase T."/>
            <person name="Nomura N."/>
            <person name="Kikuchi H."/>
            <person name="Masuho Y."/>
            <person name="Yamashita R."/>
            <person name="Nakai K."/>
            <person name="Yada T."/>
            <person name="Nakamura Y."/>
            <person name="Ohara O."/>
            <person name="Isogai T."/>
            <person name="Sugano S."/>
        </authorList>
    </citation>
    <scope>NUCLEOTIDE SEQUENCE [LARGE SCALE MRNA] (ISOFORM 3)</scope>
    <scope>NUCLEOTIDE SEQUENCE [LARGE SCALE MRNA] OF 1-188 (ISOFORM 1)</scope>
</reference>
<reference key="2">
    <citation type="journal article" date="2004" name="Nature">
        <title>The DNA sequence and biology of human chromosome 19.</title>
        <authorList>
            <person name="Grimwood J."/>
            <person name="Gordon L.A."/>
            <person name="Olsen A.S."/>
            <person name="Terry A."/>
            <person name="Schmutz J."/>
            <person name="Lamerdin J.E."/>
            <person name="Hellsten U."/>
            <person name="Goodstein D."/>
            <person name="Couronne O."/>
            <person name="Tran-Gyamfi M."/>
            <person name="Aerts A."/>
            <person name="Altherr M."/>
            <person name="Ashworth L."/>
            <person name="Bajorek E."/>
            <person name="Black S."/>
            <person name="Branscomb E."/>
            <person name="Caenepeel S."/>
            <person name="Carrano A.V."/>
            <person name="Caoile C."/>
            <person name="Chan Y.M."/>
            <person name="Christensen M."/>
            <person name="Cleland C.A."/>
            <person name="Copeland A."/>
            <person name="Dalin E."/>
            <person name="Dehal P."/>
            <person name="Denys M."/>
            <person name="Detter J.C."/>
            <person name="Escobar J."/>
            <person name="Flowers D."/>
            <person name="Fotopulos D."/>
            <person name="Garcia C."/>
            <person name="Georgescu A.M."/>
            <person name="Glavina T."/>
            <person name="Gomez M."/>
            <person name="Gonzales E."/>
            <person name="Groza M."/>
            <person name="Hammon N."/>
            <person name="Hawkins T."/>
            <person name="Haydu L."/>
            <person name="Ho I."/>
            <person name="Huang W."/>
            <person name="Israni S."/>
            <person name="Jett J."/>
            <person name="Kadner K."/>
            <person name="Kimball H."/>
            <person name="Kobayashi A."/>
            <person name="Larionov V."/>
            <person name="Leem S.-H."/>
            <person name="Lopez F."/>
            <person name="Lou Y."/>
            <person name="Lowry S."/>
            <person name="Malfatti S."/>
            <person name="Martinez D."/>
            <person name="McCready P.M."/>
            <person name="Medina C."/>
            <person name="Morgan J."/>
            <person name="Nelson K."/>
            <person name="Nolan M."/>
            <person name="Ovcharenko I."/>
            <person name="Pitluck S."/>
            <person name="Pollard M."/>
            <person name="Popkie A.P."/>
            <person name="Predki P."/>
            <person name="Quan G."/>
            <person name="Ramirez L."/>
            <person name="Rash S."/>
            <person name="Retterer J."/>
            <person name="Rodriguez A."/>
            <person name="Rogers S."/>
            <person name="Salamov A."/>
            <person name="Salazar A."/>
            <person name="She X."/>
            <person name="Smith D."/>
            <person name="Slezak T."/>
            <person name="Solovyev V."/>
            <person name="Thayer N."/>
            <person name="Tice H."/>
            <person name="Tsai M."/>
            <person name="Ustaszewska A."/>
            <person name="Vo N."/>
            <person name="Wagner M."/>
            <person name="Wheeler J."/>
            <person name="Wu K."/>
            <person name="Xie G."/>
            <person name="Yang J."/>
            <person name="Dubchak I."/>
            <person name="Furey T.S."/>
            <person name="DeJong P."/>
            <person name="Dickson M."/>
            <person name="Gordon D."/>
            <person name="Eichler E.E."/>
            <person name="Pennacchio L.A."/>
            <person name="Richardson P."/>
            <person name="Stubbs L."/>
            <person name="Rokhsar D.S."/>
            <person name="Myers R.M."/>
            <person name="Rubin E.M."/>
            <person name="Lucas S.M."/>
        </authorList>
    </citation>
    <scope>NUCLEOTIDE SEQUENCE [LARGE SCALE GENOMIC DNA]</scope>
</reference>
<reference key="3">
    <citation type="journal article" date="2004" name="Genome Res.">
        <title>The status, quality, and expansion of the NIH full-length cDNA project: the Mammalian Gene Collection (MGC).</title>
        <authorList>
            <consortium name="The MGC Project Team"/>
        </authorList>
    </citation>
    <scope>NUCLEOTIDE SEQUENCE [LARGE SCALE MRNA] (ISOFORM 2)</scope>
</reference>
<reference key="4">
    <citation type="journal article" date="1999" name="DNA Res.">
        <title>Prediction of the coding sequences of unidentified human genes. XIV. The complete sequences of 100 new cDNA clones from brain which code for large proteins in vitro.</title>
        <authorList>
            <person name="Kikuno R."/>
            <person name="Nagase T."/>
            <person name="Ishikawa K."/>
            <person name="Hirosawa M."/>
            <person name="Miyajima N."/>
            <person name="Tanaka A."/>
            <person name="Kotani H."/>
            <person name="Nomura N."/>
            <person name="Ohara O."/>
        </authorList>
    </citation>
    <scope>NUCLEOTIDE SEQUENCE [LARGE SCALE MRNA] OF 38-939 (ISOFORM 1)</scope>
    <scope>VARIANT MET-183</scope>
    <source>
        <tissue>Brain</tissue>
    </source>
</reference>
<proteinExistence type="evidence at protein level"/>
<name>ZFR2_HUMAN</name>
<evidence type="ECO:0000255" key="1"/>
<evidence type="ECO:0000255" key="2">
    <source>
        <dbReference type="PROSITE-ProRule" id="PRU01040"/>
    </source>
</evidence>
<evidence type="ECO:0000256" key="3">
    <source>
        <dbReference type="SAM" id="MobiDB-lite"/>
    </source>
</evidence>
<evidence type="ECO:0000269" key="4">
    <source>
    </source>
</evidence>
<evidence type="ECO:0000303" key="5">
    <source>
    </source>
</evidence>
<evidence type="ECO:0000303" key="6">
    <source>
    </source>
</evidence>
<evidence type="ECO:0000305" key="7"/>
<accession>Q9UPR6</accession>
<accession>B4DHD0</accession>
<keyword id="KW-0025">Alternative splicing</keyword>
<keyword id="KW-0175">Coiled coil</keyword>
<keyword id="KW-1267">Proteomics identification</keyword>
<keyword id="KW-1185">Reference proteome</keyword>
<comment type="alternative products">
    <event type="alternative splicing"/>
    <isoform>
        <id>Q9UPR6-1</id>
        <name>1</name>
        <sequence type="displayed"/>
    </isoform>
    <isoform>
        <id>Q9UPR6-2</id>
        <name>2</name>
        <sequence type="described" ref="VSP_040635 VSP_040636"/>
    </isoform>
    <isoform>
        <id>Q9UPR6-3</id>
        <name>3</name>
        <sequence type="described" ref="VSP_057301 VSP_057302"/>
    </isoform>
</comment>
<feature type="chain" id="PRO_0000308958" description="Zinc finger RNA-binding protein 2">
    <location>
        <begin position="1"/>
        <end position="939"/>
    </location>
</feature>
<feature type="domain" description="DZF" evidence="2">
    <location>
        <begin position="570"/>
        <end position="935"/>
    </location>
</feature>
<feature type="region of interest" description="Disordered" evidence="3">
    <location>
        <begin position="1"/>
        <end position="72"/>
    </location>
</feature>
<feature type="region of interest" description="Disordered" evidence="3">
    <location>
        <begin position="116"/>
        <end position="185"/>
    </location>
</feature>
<feature type="region of interest" description="Disordered" evidence="3">
    <location>
        <begin position="217"/>
        <end position="264"/>
    </location>
</feature>
<feature type="region of interest" description="Disordered" evidence="3">
    <location>
        <begin position="289"/>
        <end position="314"/>
    </location>
</feature>
<feature type="region of interest" description="Disordered" evidence="3">
    <location>
        <begin position="360"/>
        <end position="389"/>
    </location>
</feature>
<feature type="region of interest" description="Disordered" evidence="3">
    <location>
        <begin position="401"/>
        <end position="449"/>
    </location>
</feature>
<feature type="region of interest" description="Disordered" evidence="3">
    <location>
        <begin position="545"/>
        <end position="590"/>
    </location>
</feature>
<feature type="region of interest" description="Disordered" evidence="3">
    <location>
        <begin position="906"/>
        <end position="939"/>
    </location>
</feature>
<feature type="coiled-coil region" evidence="1">
    <location>
        <begin position="516"/>
        <end position="549"/>
    </location>
</feature>
<feature type="compositionally biased region" description="Polar residues" evidence="3">
    <location>
        <begin position="137"/>
        <end position="147"/>
    </location>
</feature>
<feature type="compositionally biased region" description="Polar residues" evidence="3">
    <location>
        <begin position="157"/>
        <end position="184"/>
    </location>
</feature>
<feature type="compositionally biased region" description="Pro residues" evidence="3">
    <location>
        <begin position="217"/>
        <end position="239"/>
    </location>
</feature>
<feature type="compositionally biased region" description="Basic residues" evidence="3">
    <location>
        <begin position="906"/>
        <end position="916"/>
    </location>
</feature>
<feature type="splice variant" id="VSP_040635" description="In isoform 2." evidence="6">
    <original>AQPPTLPLPTVGASYTAQPTPGMDPAVNPAFPPAAPAGYGGYQPHSGQDFAY</original>
    <variation>PEVETTPPALASGLPCALPWTVGCSGSDAVTALCPSLRGLACICSILWDPAW</variation>
    <location>
        <begin position="19"/>
        <end position="70"/>
    </location>
</feature>
<feature type="splice variant" id="VSP_040636" description="In isoform 2." evidence="6">
    <location>
        <begin position="71"/>
        <end position="939"/>
    </location>
</feature>
<feature type="splice variant" id="VSP_057301" description="In isoform 3." evidence="5">
    <original>VFKLHAKLGKPIPTLEPALAT</original>
    <variation>GLLSHRQQAADPSGGNQPNLN</variation>
    <location>
        <begin position="346"/>
        <end position="366"/>
    </location>
</feature>
<feature type="splice variant" id="VSP_057302" description="In isoform 3." evidence="5">
    <location>
        <begin position="367"/>
        <end position="939"/>
    </location>
</feature>
<feature type="sequence variant" id="VAR_036886" description="In dbSNP:rs2240235.">
    <original>S</original>
    <variation>L</variation>
    <location>
        <position position="164"/>
    </location>
</feature>
<feature type="sequence variant" id="VAR_036887" description="In dbSNP:rs2240234." evidence="4">
    <original>V</original>
    <variation>M</variation>
    <location>
        <position position="183"/>
    </location>
</feature>
<feature type="sequence variant" id="VAR_036888" description="In dbSNP:rs2240233.">
    <original>V</original>
    <variation>L</variation>
    <location>
        <position position="210"/>
    </location>
</feature>
<feature type="sequence variant" id="VAR_036889" description="In dbSNP:rs2240232.">
    <original>P</original>
    <variation>L</variation>
    <location>
        <position position="235"/>
    </location>
</feature>
<feature type="sequence variant" id="VAR_036890" description="In dbSNP:rs2301843.">
    <original>A</original>
    <variation>T</variation>
    <location>
        <position position="577"/>
    </location>
</feature>
<feature type="sequence variant" id="VAR_036891" description="In dbSNP:rs2301839.">
    <original>D</original>
    <variation>N</variation>
    <location>
        <position position="589"/>
    </location>
</feature>
<feature type="sequence variant" id="VAR_061730" description="In dbSNP:rs45465594.">
    <original>I</original>
    <variation>M</variation>
    <location>
        <position position="718"/>
    </location>
</feature>
<feature type="sequence conflict" description="In Ref. 4; DA237746." evidence="7" ref="4">
    <original>S</original>
    <variation>F</variation>
    <location>
        <position position="181"/>
    </location>
</feature>
<protein>
    <recommendedName>
        <fullName>Zinc finger RNA-binding protein 2</fullName>
    </recommendedName>
</protein>
<gene>
    <name type="primary">ZFR2</name>
    <name type="synonym">KIAA1086</name>
</gene>
<dbReference type="EMBL" id="AK295037">
    <property type="protein sequence ID" value="BAG58091.1"/>
    <property type="molecule type" value="mRNA"/>
</dbReference>
<dbReference type="EMBL" id="DA237746">
    <property type="status" value="NOT_ANNOTATED_CDS"/>
    <property type="molecule type" value="mRNA"/>
</dbReference>
<dbReference type="EMBL" id="AC004598">
    <property type="status" value="NOT_ANNOTATED_CDS"/>
    <property type="molecule type" value="Genomic_DNA"/>
</dbReference>
<dbReference type="EMBL" id="AC005777">
    <property type="status" value="NOT_ANNOTATED_CDS"/>
    <property type="molecule type" value="Genomic_DNA"/>
</dbReference>
<dbReference type="EMBL" id="AC093078">
    <property type="status" value="NOT_ANNOTATED_CDS"/>
    <property type="molecule type" value="Genomic_DNA"/>
</dbReference>
<dbReference type="EMBL" id="BC034005">
    <property type="status" value="NOT_ANNOTATED_CDS"/>
    <property type="molecule type" value="mRNA"/>
</dbReference>
<dbReference type="EMBL" id="AB029009">
    <property type="protein sequence ID" value="BAA83038.1"/>
    <property type="molecule type" value="mRNA"/>
</dbReference>
<dbReference type="CCDS" id="CCDS45921.1">
    <molecule id="Q9UPR6-1"/>
</dbReference>
<dbReference type="CCDS" id="CCDS45922.1">
    <molecule id="Q9UPR6-2"/>
</dbReference>
<dbReference type="RefSeq" id="NP_001139112.1">
    <molecule id="Q9UPR6-2"/>
    <property type="nucleotide sequence ID" value="NM_001145640.2"/>
</dbReference>
<dbReference type="RefSeq" id="NP_055989.1">
    <molecule id="Q9UPR6-1"/>
    <property type="nucleotide sequence ID" value="NM_015174.2"/>
</dbReference>
<dbReference type="SMR" id="Q9UPR6"/>
<dbReference type="BioGRID" id="116824">
    <property type="interactions" value="4"/>
</dbReference>
<dbReference type="FunCoup" id="Q9UPR6">
    <property type="interactions" value="49"/>
</dbReference>
<dbReference type="STRING" id="9606.ENSP00000262961"/>
<dbReference type="GlyGen" id="Q9UPR6">
    <property type="glycosylation" value="2 sites"/>
</dbReference>
<dbReference type="iPTMnet" id="Q9UPR6"/>
<dbReference type="PhosphoSitePlus" id="Q9UPR6"/>
<dbReference type="BioMuta" id="ZFR2"/>
<dbReference type="DMDM" id="296453074"/>
<dbReference type="jPOST" id="Q9UPR6"/>
<dbReference type="MassIVE" id="Q9UPR6"/>
<dbReference type="PaxDb" id="9606-ENSP00000262961"/>
<dbReference type="PeptideAtlas" id="Q9UPR6"/>
<dbReference type="ProteomicsDB" id="85428">
    <molecule id="Q9UPR6-1"/>
</dbReference>
<dbReference type="Antibodypedia" id="52596">
    <property type="antibodies" value="8 antibodies from 7 providers"/>
</dbReference>
<dbReference type="DNASU" id="23217"/>
<dbReference type="Ensembl" id="ENST00000262961.9">
    <molecule id="Q9UPR6-1"/>
    <property type="protein sequence ID" value="ENSP00000262961.3"/>
    <property type="gene ID" value="ENSG00000105278.12"/>
</dbReference>
<dbReference type="Ensembl" id="ENST00000438164.2">
    <molecule id="Q9UPR6-3"/>
    <property type="protein sequence ID" value="ENSP00000388974.2"/>
    <property type="gene ID" value="ENSG00000105278.12"/>
</dbReference>
<dbReference type="Ensembl" id="ENST00000439086.2">
    <molecule id="Q9UPR6-2"/>
    <property type="protein sequence ID" value="ENSP00000388567.1"/>
    <property type="gene ID" value="ENSG00000105278.12"/>
</dbReference>
<dbReference type="GeneID" id="23217"/>
<dbReference type="KEGG" id="hsa:23217"/>
<dbReference type="MANE-Select" id="ENST00000262961.9">
    <property type="protein sequence ID" value="ENSP00000262961.3"/>
    <property type="RefSeq nucleotide sequence ID" value="NM_015174.2"/>
    <property type="RefSeq protein sequence ID" value="NP_055989.1"/>
</dbReference>
<dbReference type="UCSC" id="uc002lyw.3">
    <molecule id="Q9UPR6-1"/>
    <property type="organism name" value="human"/>
</dbReference>
<dbReference type="AGR" id="HGNC:29189"/>
<dbReference type="CTD" id="23217"/>
<dbReference type="DisGeNET" id="23217"/>
<dbReference type="GeneCards" id="ZFR2"/>
<dbReference type="HGNC" id="HGNC:29189">
    <property type="gene designation" value="ZFR2"/>
</dbReference>
<dbReference type="HPA" id="ENSG00000105278">
    <property type="expression patterns" value="Group enriched (brain, pituitary gland, retina, testis)"/>
</dbReference>
<dbReference type="MIM" id="619284">
    <property type="type" value="gene"/>
</dbReference>
<dbReference type="neXtProt" id="NX_Q9UPR6"/>
<dbReference type="OpenTargets" id="ENSG00000105278"/>
<dbReference type="PharmGKB" id="PA162409746"/>
<dbReference type="VEuPathDB" id="HostDB:ENSG00000105278"/>
<dbReference type="eggNOG" id="KOG3792">
    <property type="taxonomic scope" value="Eukaryota"/>
</dbReference>
<dbReference type="GeneTree" id="ENSGT00940000162148"/>
<dbReference type="HOGENOM" id="CLU_012026_1_0_1"/>
<dbReference type="InParanoid" id="Q9UPR6"/>
<dbReference type="OMA" id="SCQEPRM"/>
<dbReference type="OrthoDB" id="8898434at2759"/>
<dbReference type="PAN-GO" id="Q9UPR6">
    <property type="GO annotations" value="2 GO annotations based on evolutionary models"/>
</dbReference>
<dbReference type="PhylomeDB" id="Q9UPR6"/>
<dbReference type="TreeFam" id="TF320194"/>
<dbReference type="PathwayCommons" id="Q9UPR6"/>
<dbReference type="BioGRID-ORCS" id="23217">
    <property type="hits" value="10 hits in 1152 CRISPR screens"/>
</dbReference>
<dbReference type="ChiTaRS" id="ZFR2">
    <property type="organism name" value="human"/>
</dbReference>
<dbReference type="GenomeRNAi" id="23217"/>
<dbReference type="Pharos" id="Q9UPR6">
    <property type="development level" value="Tdark"/>
</dbReference>
<dbReference type="PRO" id="PR:Q9UPR6"/>
<dbReference type="Proteomes" id="UP000005640">
    <property type="component" value="Chromosome 19"/>
</dbReference>
<dbReference type="RNAct" id="Q9UPR6">
    <property type="molecule type" value="protein"/>
</dbReference>
<dbReference type="Bgee" id="ENSG00000105278">
    <property type="expression patterns" value="Expressed in pituitary gland and 127 other cell types or tissues"/>
</dbReference>
<dbReference type="ExpressionAtlas" id="Q9UPR6">
    <property type="expression patterns" value="baseline and differential"/>
</dbReference>
<dbReference type="GO" id="GO:0003725">
    <property type="term" value="F:double-stranded RNA binding"/>
    <property type="evidence" value="ECO:0000318"/>
    <property type="project" value="GO_Central"/>
</dbReference>
<dbReference type="GO" id="GO:0003727">
    <property type="term" value="F:single-stranded RNA binding"/>
    <property type="evidence" value="ECO:0000318"/>
    <property type="project" value="GO_Central"/>
</dbReference>
<dbReference type="GO" id="GO:0008270">
    <property type="term" value="F:zinc ion binding"/>
    <property type="evidence" value="ECO:0007669"/>
    <property type="project" value="InterPro"/>
</dbReference>
<dbReference type="FunFam" id="1.10.1410.40:FF:000001">
    <property type="entry name" value="interleukin enhancer-binding factor 3 isoform X1"/>
    <property type="match status" value="1"/>
</dbReference>
<dbReference type="FunFam" id="3.30.160.60:FF:000210">
    <property type="entry name" value="Zinc finger RNA-binding protein 2"/>
    <property type="match status" value="1"/>
</dbReference>
<dbReference type="FunFam" id="3.30.460.10:FF:000010">
    <property type="entry name" value="Zinc finger RNA-binding protein 2"/>
    <property type="match status" value="1"/>
</dbReference>
<dbReference type="FunFam" id="3.30.160.60:FF:000898">
    <property type="entry name" value="zinc finger RNA-binding protein 2"/>
    <property type="match status" value="1"/>
</dbReference>
<dbReference type="Gene3D" id="1.10.1410.40">
    <property type="match status" value="1"/>
</dbReference>
<dbReference type="Gene3D" id="3.30.460.10">
    <property type="entry name" value="Beta Polymerase, domain 2"/>
    <property type="match status" value="1"/>
</dbReference>
<dbReference type="Gene3D" id="3.30.160.60">
    <property type="entry name" value="Classic Zinc Finger"/>
    <property type="match status" value="2"/>
</dbReference>
<dbReference type="InterPro" id="IPR006561">
    <property type="entry name" value="DZF_dom"/>
</dbReference>
<dbReference type="InterPro" id="IPR049402">
    <property type="entry name" value="DZF_dom_C"/>
</dbReference>
<dbReference type="InterPro" id="IPR049401">
    <property type="entry name" value="DZF_dom_N"/>
</dbReference>
<dbReference type="InterPro" id="IPR003604">
    <property type="entry name" value="Matrin/U1-like-C_Znf_C2H2"/>
</dbReference>
<dbReference type="InterPro" id="IPR043519">
    <property type="entry name" value="NT_sf"/>
</dbReference>
<dbReference type="InterPro" id="IPR036236">
    <property type="entry name" value="Znf_C2H2_sf"/>
</dbReference>
<dbReference type="InterPro" id="IPR013087">
    <property type="entry name" value="Znf_C2H2_type"/>
</dbReference>
<dbReference type="PANTHER" id="PTHR45762">
    <property type="entry name" value="ZINC FINGER RNA-BINDING PROTEIN"/>
    <property type="match status" value="1"/>
</dbReference>
<dbReference type="PANTHER" id="PTHR45762:SF2">
    <property type="entry name" value="ZINC FINGER RNA-BINDING PROTEIN 2"/>
    <property type="match status" value="1"/>
</dbReference>
<dbReference type="Pfam" id="PF20965">
    <property type="entry name" value="DZF_C"/>
    <property type="match status" value="1"/>
</dbReference>
<dbReference type="Pfam" id="PF07528">
    <property type="entry name" value="DZF_N"/>
    <property type="match status" value="1"/>
</dbReference>
<dbReference type="Pfam" id="PF12874">
    <property type="entry name" value="zf-met"/>
    <property type="match status" value="3"/>
</dbReference>
<dbReference type="SMART" id="SM00572">
    <property type="entry name" value="DZF"/>
    <property type="match status" value="1"/>
</dbReference>
<dbReference type="SMART" id="SM00355">
    <property type="entry name" value="ZnF_C2H2"/>
    <property type="match status" value="3"/>
</dbReference>
<dbReference type="SMART" id="SM00451">
    <property type="entry name" value="ZnF_U1"/>
    <property type="match status" value="3"/>
</dbReference>
<dbReference type="SUPFAM" id="SSF57667">
    <property type="entry name" value="beta-beta-alpha zinc fingers"/>
    <property type="match status" value="3"/>
</dbReference>
<dbReference type="PROSITE" id="PS51703">
    <property type="entry name" value="DZF"/>
    <property type="match status" value="1"/>
</dbReference>